<sequence>MAWTYIMRQSDLPPGEMQRHEGGPEPVMVCNVDGEFFAVQDTCTHGNWALSDGYLDGGVVECTLHFGKFCVRTGKVKALPACKPIKVFPIKVEGGDVHVDLDAGEVK</sequence>
<protein>
    <recommendedName>
        <fullName evidence="5">Chlorobenzene dioxygenase, ferredoxin component</fullName>
    </recommendedName>
</protein>
<accession>O24678</accession>
<name>TECA3_CUPXP</name>
<reference key="1">
    <citation type="journal article" date="1997" name="Eur. J. Biochem.">
        <title>Genetic and biochemical characterization of the broad spectrum chlorobenzene dioxygenase from Burkholderia sp. strain PS12--dechlorination of 1,2,4,5-tetrachlorobenzene.</title>
        <authorList>
            <person name="Beil S."/>
            <person name="Happe B."/>
            <person name="Timmis K.N."/>
            <person name="Pieper D.H."/>
        </authorList>
    </citation>
    <scope>NUCLEOTIDE SEQUENCE [GENOMIC DNA]</scope>
    <scope>FUNCTION</scope>
    <scope>SUBUNIT</scope>
    <source>
        <strain>PS12</strain>
    </source>
</reference>
<reference key="2">
    <citation type="journal article" date="2001" name="Appl. Environ. Microbiol.">
        <title>Transformation of chlorinated benzenes and toluenes by Ralstonia sp. strain PS12 tecA (tetrachlorobenzene dioxygenase) and tecB (chlorobenzene dihydrodiol dehydrogenase) gene products.</title>
        <authorList>
            <person name="Pollmann K."/>
            <person name="Beil S."/>
            <person name="Pieper D.H."/>
        </authorList>
    </citation>
    <scope>FUNCTION</scope>
    <source>
        <strain>PS12</strain>
    </source>
</reference>
<keyword id="KW-0001">2Fe-2S</keyword>
<keyword id="KW-0058">Aromatic hydrocarbons catabolism</keyword>
<keyword id="KW-0249">Electron transport</keyword>
<keyword id="KW-0408">Iron</keyword>
<keyword id="KW-0411">Iron-sulfur</keyword>
<keyword id="KW-0479">Metal-binding</keyword>
<keyword id="KW-0813">Transport</keyword>
<evidence type="ECO:0000255" key="1">
    <source>
        <dbReference type="PROSITE-ProRule" id="PRU00628"/>
    </source>
</evidence>
<evidence type="ECO:0000269" key="2">
    <source>
    </source>
</evidence>
<evidence type="ECO:0000269" key="3">
    <source>
    </source>
</evidence>
<evidence type="ECO:0000303" key="4">
    <source>
    </source>
</evidence>
<evidence type="ECO:0000305" key="5"/>
<evidence type="ECO:0000305" key="6">
    <source>
    </source>
</evidence>
<feature type="chain" id="PRO_0000453517" description="Chlorobenzene dioxygenase, ferredoxin component">
    <location>
        <begin position="1"/>
        <end position="107"/>
    </location>
</feature>
<feature type="domain" description="Rieske" evidence="1">
    <location>
        <begin position="4"/>
        <end position="99"/>
    </location>
</feature>
<feature type="binding site" evidence="1">
    <location>
        <position position="43"/>
    </location>
    <ligand>
        <name>[2Fe-2S] cluster</name>
        <dbReference type="ChEBI" id="CHEBI:190135"/>
    </ligand>
</feature>
<feature type="binding site" evidence="1">
    <location>
        <position position="45"/>
    </location>
    <ligand>
        <name>[2Fe-2S] cluster</name>
        <dbReference type="ChEBI" id="CHEBI:190135"/>
    </ligand>
</feature>
<feature type="binding site" evidence="1">
    <location>
        <position position="62"/>
    </location>
    <ligand>
        <name>[2Fe-2S] cluster</name>
        <dbReference type="ChEBI" id="CHEBI:190135"/>
    </ligand>
</feature>
<feature type="binding site" evidence="1">
    <location>
        <position position="65"/>
    </location>
    <ligand>
        <name>[2Fe-2S] cluster</name>
        <dbReference type="ChEBI" id="CHEBI:190135"/>
    </ligand>
</feature>
<proteinExistence type="evidence at protein level"/>
<dbReference type="EMBL" id="U78099">
    <property type="protein sequence ID" value="AAC46392.1"/>
    <property type="molecule type" value="Genomic_DNA"/>
</dbReference>
<dbReference type="SMR" id="O24678"/>
<dbReference type="BioCyc" id="MetaCyc:MONOMER-14392"/>
<dbReference type="GO" id="GO:0051537">
    <property type="term" value="F:2 iron, 2 sulfur cluster binding"/>
    <property type="evidence" value="ECO:0007669"/>
    <property type="project" value="UniProtKB-KW"/>
</dbReference>
<dbReference type="GO" id="GO:0046872">
    <property type="term" value="F:metal ion binding"/>
    <property type="evidence" value="ECO:0007669"/>
    <property type="project" value="UniProtKB-KW"/>
</dbReference>
<dbReference type="GO" id="GO:0009056">
    <property type="term" value="P:catabolic process"/>
    <property type="evidence" value="ECO:0007669"/>
    <property type="project" value="UniProtKB-KW"/>
</dbReference>
<dbReference type="CDD" id="cd03528">
    <property type="entry name" value="Rieske_RO_ferredoxin"/>
    <property type="match status" value="1"/>
</dbReference>
<dbReference type="Gene3D" id="2.102.10.10">
    <property type="entry name" value="Rieske [2Fe-2S] iron-sulphur domain"/>
    <property type="match status" value="1"/>
</dbReference>
<dbReference type="InterPro" id="IPR017941">
    <property type="entry name" value="Rieske_2Fe-2S"/>
</dbReference>
<dbReference type="InterPro" id="IPR036922">
    <property type="entry name" value="Rieske_2Fe-2S_sf"/>
</dbReference>
<dbReference type="PANTHER" id="PTHR21496:SF23">
    <property type="entry name" value="3-PHENYLPROPIONATE_CINNAMIC ACID DIOXYGENASE FERREDOXIN SUBUNIT"/>
    <property type="match status" value="1"/>
</dbReference>
<dbReference type="PANTHER" id="PTHR21496">
    <property type="entry name" value="FERREDOXIN-RELATED"/>
    <property type="match status" value="1"/>
</dbReference>
<dbReference type="Pfam" id="PF00355">
    <property type="entry name" value="Rieske"/>
    <property type="match status" value="1"/>
</dbReference>
<dbReference type="SUPFAM" id="SSF50022">
    <property type="entry name" value="ISP domain"/>
    <property type="match status" value="1"/>
</dbReference>
<dbReference type="PROSITE" id="PS51296">
    <property type="entry name" value="RIESKE"/>
    <property type="match status" value="1"/>
</dbReference>
<comment type="function">
    <text evidence="2 3">Part of the chlorobenzene dioxygenase system that catalyzes the dihydroxylation of a range of aromatic compounds, including chlorinated benzenes and toluenes, and dinuclear aromatics such as biphenyl and dibenzo-p-dioxin.</text>
</comment>
<comment type="cofactor">
    <cofactor evidence="1">
        <name>[2Fe-2S] cluster</name>
        <dbReference type="ChEBI" id="CHEBI:190135"/>
    </cofactor>
    <text evidence="1">Binds 1 [2Fe-2S] cluster per subunit.</text>
</comment>
<comment type="pathway">
    <text evidence="5">Aromatic compound metabolism.</text>
</comment>
<comment type="subunit">
    <text evidence="6">This dioxygenase system consists of four proteins: the two subunits of the oxygenase component (TecA1 and TecA2), a ferredoxin (TecA3) and a ferredoxin reductase (TecA4).</text>
</comment>
<comment type="similarity">
    <text evidence="5">Belongs to the bacterial ring-hydroxylating dioxygenase ferredoxin component family.</text>
</comment>
<organism>
    <name type="scientific">Cupriavidus sp. (strain PS12)</name>
    <dbReference type="NCBI Taxonomy" id="393999"/>
    <lineage>
        <taxon>Bacteria</taxon>
        <taxon>Pseudomonadati</taxon>
        <taxon>Pseudomonadota</taxon>
        <taxon>Betaproteobacteria</taxon>
        <taxon>Burkholderiales</taxon>
        <taxon>Burkholderiaceae</taxon>
        <taxon>Cupriavidus</taxon>
    </lineage>
</organism>
<gene>
    <name evidence="4" type="primary">tecA3</name>
</gene>